<sequence length="451" mass="48542">MRTRITLALAVLLLLLAGCSPGAPADGPVTLRFQSLAWQPDSVAATKELVGEWNATHPDVKVEYIQGSWDSVHDQLLTSFEGGEAPDVIHDASDDLADFAYGGYLADLSGLLPARLASDIPRGSWETATFGRGVYGVPFLQEPRVLIADADRLRAAKVRIPTPGHPWSWPEFRQVAKKLTGPGRYGVAWPLKEPVSATLNLSLSAGGRLFHRGADDKVTVRFEAGDEVVARTIHDQVAVDREHAPASTLGSGGADTLPGLFGGRYAMVPLGFSYRQQIVRQAPEDFHWQVLPAPAGAGGLTQGVSPQTLSVSADCPHKKEAVAFIDFLLRPRNMVRLALGDWMLPTGTQALKDPALHTARHGWATGTALAARLRPAPAQSVRGYPEWKDKVATPAYQRYYSGASTLADVRHAWSGTATWCWPATSADPPPGVPRAGKRNIRDATSRLPSTP</sequence>
<organism>
    <name type="scientific">Streptomyces antibioticus</name>
    <dbReference type="NCBI Taxonomy" id="1890"/>
    <lineage>
        <taxon>Bacteria</taxon>
        <taxon>Bacillati</taxon>
        <taxon>Actinomycetota</taxon>
        <taxon>Actinomycetes</taxon>
        <taxon>Kitasatosporales</taxon>
        <taxon>Streptomycetaceae</taxon>
        <taxon>Streptomyces</taxon>
    </lineage>
</organism>
<accession>Q53684</accession>
<feature type="signal peptide" evidence="1">
    <location>
        <begin position="1"/>
        <end position="18"/>
    </location>
</feature>
<feature type="chain" id="PRO_0000022712" description="Uncharacterized lipoprotein in oleD 5'region">
    <location>
        <begin position="19"/>
        <end position="451"/>
    </location>
</feature>
<feature type="region of interest" description="Disordered" evidence="2">
    <location>
        <begin position="424"/>
        <end position="451"/>
    </location>
</feature>
<feature type="lipid moiety-binding region" description="N-palmitoyl cysteine" evidence="1">
    <location>
        <position position="19"/>
    </location>
</feature>
<feature type="lipid moiety-binding region" description="S-diacylglycerol cysteine" evidence="1">
    <location>
        <position position="19"/>
    </location>
</feature>
<comment type="function">
    <text>May participate in oleandomycin glycosylation and secretion during antibiotic production.</text>
</comment>
<comment type="subcellular location">
    <subcellularLocation>
        <location evidence="1">Cell membrane</location>
        <topology evidence="1">Lipid-anchor</topology>
    </subcellularLocation>
</comment>
<name>YOE2_STRAT</name>
<dbReference type="EMBL" id="Z22577">
    <property type="protein sequence ID" value="CAA80300.1"/>
    <property type="molecule type" value="Genomic_DNA"/>
</dbReference>
<dbReference type="PIR" id="S78104">
    <property type="entry name" value="S78104"/>
</dbReference>
<dbReference type="SMR" id="Q53684"/>
<dbReference type="GO" id="GO:0005886">
    <property type="term" value="C:plasma membrane"/>
    <property type="evidence" value="ECO:0007669"/>
    <property type="project" value="UniProtKB-SubCell"/>
</dbReference>
<dbReference type="Gene3D" id="3.40.190.10">
    <property type="entry name" value="Periplasmic binding protein-like II"/>
    <property type="match status" value="1"/>
</dbReference>
<dbReference type="InterPro" id="IPR050490">
    <property type="entry name" value="Bact_solute-bd_prot1"/>
</dbReference>
<dbReference type="InterPro" id="IPR006059">
    <property type="entry name" value="SBP"/>
</dbReference>
<dbReference type="PANTHER" id="PTHR43649:SF30">
    <property type="entry name" value="ABC TRANSPORTER SUBSTRATE-BINDING PROTEIN"/>
    <property type="match status" value="1"/>
</dbReference>
<dbReference type="PANTHER" id="PTHR43649">
    <property type="entry name" value="ARABINOSE-BINDING PROTEIN-RELATED"/>
    <property type="match status" value="1"/>
</dbReference>
<dbReference type="Pfam" id="PF01547">
    <property type="entry name" value="SBP_bac_1"/>
    <property type="match status" value="1"/>
</dbReference>
<dbReference type="SUPFAM" id="SSF53850">
    <property type="entry name" value="Periplasmic binding protein-like II"/>
    <property type="match status" value="1"/>
</dbReference>
<dbReference type="PROSITE" id="PS51257">
    <property type="entry name" value="PROKAR_LIPOPROTEIN"/>
    <property type="match status" value="1"/>
</dbReference>
<reference key="1">
    <citation type="journal article" date="1993" name="Gene">
        <title>Characterization of a Streptomyces antibioticus gene cluster encoding a glycosyltransferase involved in oleandomycin inactivation.</title>
        <authorList>
            <person name="Hernandez C."/>
            <person name="Olano C."/>
            <person name="Mendez C."/>
            <person name="Salas J.A."/>
        </authorList>
    </citation>
    <scope>NUCLEOTIDE SEQUENCE [GENOMIC DNA]</scope>
    <source>
        <strain>ATCC 11891 / DSM 40868 / BCRC 11580 / NCIMB 11506 / PSA 205</strain>
    </source>
</reference>
<protein>
    <recommendedName>
        <fullName>Uncharacterized lipoprotein in oleD 5'region</fullName>
    </recommendedName>
    <alternativeName>
        <fullName>ORF2</fullName>
    </alternativeName>
</protein>
<proteinExistence type="inferred from homology"/>
<keyword id="KW-1003">Cell membrane</keyword>
<keyword id="KW-0449">Lipoprotein</keyword>
<keyword id="KW-0472">Membrane</keyword>
<keyword id="KW-0564">Palmitate</keyword>
<keyword id="KW-0732">Signal</keyword>
<evidence type="ECO:0000255" key="1">
    <source>
        <dbReference type="PROSITE-ProRule" id="PRU00303"/>
    </source>
</evidence>
<evidence type="ECO:0000256" key="2">
    <source>
        <dbReference type="SAM" id="MobiDB-lite"/>
    </source>
</evidence>